<comment type="function">
    <text evidence="5">Possible role in short-day photoperiod floral induction.</text>
</comment>
<comment type="catalytic activity">
    <reaction evidence="6">
        <text>L-seryl-[protein] + ATP = O-phospho-L-seryl-[protein] + ADP + H(+)</text>
        <dbReference type="Rhea" id="RHEA:17989"/>
        <dbReference type="Rhea" id="RHEA-COMP:9863"/>
        <dbReference type="Rhea" id="RHEA-COMP:11604"/>
        <dbReference type="ChEBI" id="CHEBI:15378"/>
        <dbReference type="ChEBI" id="CHEBI:29999"/>
        <dbReference type="ChEBI" id="CHEBI:30616"/>
        <dbReference type="ChEBI" id="CHEBI:83421"/>
        <dbReference type="ChEBI" id="CHEBI:456216"/>
        <dbReference type="EC" id="2.7.11.1"/>
    </reaction>
</comment>
<comment type="catalytic activity">
    <reaction evidence="6">
        <text>L-threonyl-[protein] + ATP = O-phospho-L-threonyl-[protein] + ADP + H(+)</text>
        <dbReference type="Rhea" id="RHEA:46608"/>
        <dbReference type="Rhea" id="RHEA-COMP:11060"/>
        <dbReference type="Rhea" id="RHEA-COMP:11605"/>
        <dbReference type="ChEBI" id="CHEBI:15378"/>
        <dbReference type="ChEBI" id="CHEBI:30013"/>
        <dbReference type="ChEBI" id="CHEBI:30616"/>
        <dbReference type="ChEBI" id="CHEBI:61977"/>
        <dbReference type="ChEBI" id="CHEBI:456216"/>
        <dbReference type="EC" id="2.7.11.1"/>
    </reaction>
</comment>
<comment type="subcellular location">
    <molecule>Isoform INRPK1</molecule>
    <subcellularLocation>
        <location>Cell membrane</location>
        <topology>Single-pass type I membrane protein</topology>
    </subcellularLocation>
</comment>
<comment type="subcellular location">
    <molecule>Isoform INRPK1b</molecule>
    <subcellularLocation>
        <location>Secreted</location>
    </subcellularLocation>
</comment>
<comment type="subcellular location">
    <molecule>Isoform INRPK1c</molecule>
    <subcellularLocation>
        <location evidence="6">Cell membrane</location>
        <topology evidence="6">Single-pass type II membrane protein</topology>
    </subcellularLocation>
</comment>
<comment type="alternative products">
    <event type="alternative splicing"/>
    <event type="alternative initiation"/>
    <isoform>
        <id>P93194-1</id>
        <name evidence="4">INRPK1</name>
        <sequence type="displayed"/>
    </isoform>
    <isoform>
        <id>P93194-2</id>
        <name evidence="4">INRPK1a</name>
        <sequence type="described" ref="VSP_050676"/>
    </isoform>
    <isoform>
        <id>P93194-3</id>
        <name evidence="4">INRPK1b</name>
        <sequence type="described" ref="VSP_050677 VSP_050678"/>
    </isoform>
    <isoform>
        <id>P93194-4</id>
        <name>INRPK1c</name>
        <sequence type="described" ref="VSP_018857"/>
    </isoform>
</comment>
<comment type="tissue specificity">
    <text evidence="4">INRPK1 and INRPK1b are expressed in leaves, cotyledons, shoot tips and roots from induced and vegetative plants. The highest concentrations of INRPK1 are found in vegetative roots, and the lowest concentrations in vegetative cotyledons. INRPK1b is more abundant in roots than other tissues. INRPK1a is expressed in vegetative roots. INRPK1c is expressed in cotyledons.</text>
</comment>
<comment type="miscellaneous">
    <molecule>Isoform INRPK1c</molecule>
    <text evidence="6">Produced by alternative initiation at Met-667 of isoform INRPK1.</text>
</comment>
<comment type="similarity">
    <text evidence="2">Belongs to the protein kinase superfamily. Ser/Thr protein kinase family.</text>
</comment>
<organism evidence="7">
    <name type="scientific">Ipomoea nil</name>
    <name type="common">Japanese morning glory</name>
    <name type="synonym">Pharbitis nil</name>
    <dbReference type="NCBI Taxonomy" id="35883"/>
    <lineage>
        <taxon>Eukaryota</taxon>
        <taxon>Viridiplantae</taxon>
        <taxon>Streptophyta</taxon>
        <taxon>Embryophyta</taxon>
        <taxon>Tracheophyta</taxon>
        <taxon>Spermatophyta</taxon>
        <taxon>Magnoliopsida</taxon>
        <taxon>eudicotyledons</taxon>
        <taxon>Gunneridae</taxon>
        <taxon>Pentapetalae</taxon>
        <taxon>asterids</taxon>
        <taxon>lamiids</taxon>
        <taxon>Solanales</taxon>
        <taxon>Convolvulaceae</taxon>
        <taxon>Ipomoeeae</taxon>
        <taxon>Ipomoea</taxon>
    </lineage>
</organism>
<feature type="signal peptide" evidence="1">
    <location>
        <begin position="1"/>
        <end position="20"/>
    </location>
</feature>
<feature type="chain" id="PRO_0000024382" description="Receptor-like protein kinase">
    <location>
        <begin position="21"/>
        <end position="1109"/>
    </location>
</feature>
<feature type="topological domain" description="Extracellular" evidence="1">
    <location>
        <begin position="21"/>
        <end position="764"/>
    </location>
</feature>
<feature type="transmembrane region" description="Helical" evidence="1">
    <location>
        <begin position="765"/>
        <end position="785"/>
    </location>
</feature>
<feature type="topological domain" description="Cytoplasmic" evidence="1">
    <location>
        <begin position="786"/>
        <end position="1109"/>
    </location>
</feature>
<feature type="repeat" description="LRR 1">
    <location>
        <begin position="69"/>
        <end position="92"/>
    </location>
</feature>
<feature type="repeat" description="LRR 2">
    <location>
        <begin position="93"/>
        <end position="115"/>
    </location>
</feature>
<feature type="repeat" description="LRR 3">
    <location>
        <begin position="117"/>
        <end position="140"/>
    </location>
</feature>
<feature type="repeat" description="LRR 4" evidence="6">
    <location>
        <begin position="141"/>
        <end position="162"/>
    </location>
</feature>
<feature type="repeat" description="LRR 5">
    <location>
        <begin position="165"/>
        <end position="187"/>
    </location>
</feature>
<feature type="repeat" description="LRR 6">
    <location>
        <begin position="189"/>
        <end position="209"/>
    </location>
</feature>
<feature type="repeat" description="LRR 7">
    <location>
        <begin position="213"/>
        <end position="236"/>
    </location>
</feature>
<feature type="repeat" description="LRR 8">
    <location>
        <begin position="237"/>
        <end position="258"/>
    </location>
</feature>
<feature type="repeat" description="LRR 9">
    <location>
        <begin position="261"/>
        <end position="284"/>
    </location>
</feature>
<feature type="repeat" description="LRR 10">
    <location>
        <begin position="309"/>
        <end position="331"/>
    </location>
</feature>
<feature type="repeat" description="LRR 11">
    <location>
        <begin position="333"/>
        <end position="355"/>
    </location>
</feature>
<feature type="repeat" description="LRR 12">
    <location>
        <begin position="357"/>
        <end position="378"/>
    </location>
</feature>
<feature type="repeat" description="LRR 13">
    <location>
        <begin position="381"/>
        <end position="404"/>
    </location>
</feature>
<feature type="repeat" description="LRR 14">
    <location>
        <begin position="405"/>
        <end position="427"/>
    </location>
</feature>
<feature type="repeat" description="LRR 15">
    <location>
        <begin position="429"/>
        <end position="451"/>
    </location>
</feature>
<feature type="repeat" description="LRR 16">
    <location>
        <begin position="453"/>
        <end position="476"/>
    </location>
</feature>
<feature type="repeat" description="LRR 17">
    <location>
        <begin position="477"/>
        <end position="499"/>
    </location>
</feature>
<feature type="repeat" description="LRR 18">
    <location>
        <begin position="500"/>
        <end position="523"/>
    </location>
</feature>
<feature type="repeat" description="LRR 19">
    <location>
        <begin position="524"/>
        <end position="546"/>
    </location>
</feature>
<feature type="repeat" description="LRR 20">
    <location>
        <begin position="548"/>
        <end position="569"/>
    </location>
</feature>
<feature type="repeat" description="LRR 21">
    <location>
        <begin position="572"/>
        <end position="595"/>
    </location>
</feature>
<feature type="repeat" description="LRR 22">
    <location>
        <begin position="596"/>
        <end position="618"/>
    </location>
</feature>
<feature type="repeat" description="LRR 23">
    <location>
        <begin position="620"/>
        <end position="642"/>
    </location>
</feature>
<feature type="repeat" description="LRR 24">
    <location>
        <begin position="643"/>
        <end position="666"/>
    </location>
</feature>
<feature type="repeat" description="LRR 25">
    <location>
        <begin position="667"/>
        <end position="689"/>
    </location>
</feature>
<feature type="repeat" description="LRR 26">
    <location>
        <begin position="690"/>
        <end position="710"/>
    </location>
</feature>
<feature type="domain" description="Protein kinase" evidence="2 6">
    <location>
        <begin position="816"/>
        <end position="1096"/>
    </location>
</feature>
<feature type="repeat" description="LRR 27" evidence="6">
    <location>
        <begin position="827"/>
        <end position="850"/>
    </location>
</feature>
<feature type="repeat" description="LRR 28" evidence="6">
    <location>
        <begin position="958"/>
        <end position="981"/>
    </location>
</feature>
<feature type="active site" description="Proton acceptor" evidence="2 3">
    <location>
        <position position="942"/>
    </location>
</feature>
<feature type="binding site" evidence="2">
    <location>
        <begin position="822"/>
        <end position="830"/>
    </location>
    <ligand>
        <name>ATP</name>
        <dbReference type="ChEBI" id="CHEBI:30616"/>
    </ligand>
</feature>
<feature type="binding site" evidence="2">
    <location>
        <position position="845"/>
    </location>
    <ligand>
        <name>ATP</name>
        <dbReference type="ChEBI" id="CHEBI:30616"/>
    </ligand>
</feature>
<feature type="glycosylation site" description="N-linked (GlcNAc...) asparagine" evidence="6">
    <location>
        <position position="50"/>
    </location>
</feature>
<feature type="glycosylation site" description="N-linked (GlcNAc...) asparagine" evidence="6">
    <location>
        <position position="74"/>
    </location>
</feature>
<feature type="glycosylation site" description="N-linked (GlcNAc...) asparagine" evidence="6">
    <location>
        <position position="114"/>
    </location>
</feature>
<feature type="glycosylation site" description="N-linked (GlcNAc...) asparagine" evidence="6">
    <location>
        <position position="144"/>
    </location>
</feature>
<feature type="glycosylation site" description="N-linked (GlcNAc...) asparagine" evidence="6">
    <location>
        <position position="177"/>
    </location>
</feature>
<feature type="glycosylation site" description="N-linked (GlcNAc...) asparagine" evidence="6">
    <location>
        <position position="186"/>
    </location>
</feature>
<feature type="glycosylation site" description="N-linked (GlcNAc...) asparagine" evidence="6">
    <location>
        <position position="210"/>
    </location>
</feature>
<feature type="glycosylation site" description="N-linked (GlcNAc...) asparagine" evidence="6">
    <location>
        <position position="245"/>
    </location>
</feature>
<feature type="glycosylation site" description="N-linked (GlcNAc...) asparagine" evidence="6">
    <location>
        <position position="282"/>
    </location>
</feature>
<feature type="glycosylation site" description="N-linked (GlcNAc...) asparagine" evidence="6">
    <location>
        <position position="367"/>
    </location>
</feature>
<feature type="glycosylation site" description="N-linked (GlcNAc...) asparagine" evidence="6">
    <location>
        <position position="391"/>
    </location>
</feature>
<feature type="glycosylation site" description="N-linked (GlcNAc...) asparagine" evidence="6">
    <location>
        <position position="427"/>
    </location>
</feature>
<feature type="glycosylation site" description="N-linked (GlcNAc...) asparagine" evidence="6">
    <location>
        <position position="510"/>
    </location>
</feature>
<feature type="glycosylation site" description="N-linked (GlcNAc...) asparagine" evidence="6">
    <location>
        <position position="524"/>
    </location>
</feature>
<feature type="glycosylation site" description="N-linked (GlcNAc...) asparagine" evidence="6">
    <location>
        <position position="553"/>
    </location>
</feature>
<feature type="glycosylation site" description="N-linked (GlcNAc...) asparagine" evidence="6">
    <location>
        <position position="584"/>
    </location>
</feature>
<feature type="glycosylation site" description="N-linked (GlcNAc...) asparagine" evidence="6">
    <location>
        <position position="648"/>
    </location>
</feature>
<feature type="glycosylation site" description="N-linked (GlcNAc...) asparagine" evidence="6">
    <location>
        <position position="677"/>
    </location>
</feature>
<feature type="glycosylation site" description="N-linked (GlcNAc...) asparagine" evidence="6">
    <location>
        <position position="695"/>
    </location>
</feature>
<feature type="splice variant" id="VSP_018857" description="In isoform INRPK1c." evidence="6">
    <location>
        <begin position="1"/>
        <end position="666"/>
    </location>
</feature>
<feature type="splice variant" id="VSP_050676" description="In isoform INRPK1a." evidence="5">
    <location>
        <begin position="130"/>
        <end position="591"/>
    </location>
</feature>
<feature type="splice variant" id="VSP_050677" description="In isoform INRPK1b." evidence="5">
    <original>GNIPDTLGALQNLRNLSLFFNSLIGP</original>
    <variation>ARWKFTSWRYSTSGSFAGTEVIKFEQ</variation>
    <location>
        <begin position="130"/>
        <end position="155"/>
    </location>
</feature>
<feature type="splice variant" id="VSP_050678" description="In isoform INRPK1b." evidence="5">
    <location>
        <begin position="156"/>
        <end position="1109"/>
    </location>
</feature>
<dbReference type="EC" id="2.7.11.1"/>
<dbReference type="EMBL" id="U77888">
    <property type="protein sequence ID" value="AAB36558.2"/>
    <property type="molecule type" value="Genomic_DNA"/>
</dbReference>
<dbReference type="EMBL" id="U77888">
    <property type="protein sequence ID" value="AAG52992.2"/>
    <property type="molecule type" value="Genomic_DNA"/>
</dbReference>
<dbReference type="EMBL" id="U77888">
    <property type="protein sequence ID" value="AAG52993.2"/>
    <property type="molecule type" value="Genomic_DNA"/>
</dbReference>
<dbReference type="EMBL" id="U77888">
    <property type="protein sequence ID" value="AAG52994.1"/>
    <property type="molecule type" value="Genomic_DNA"/>
</dbReference>
<dbReference type="PIR" id="T18536">
    <property type="entry name" value="T18536"/>
</dbReference>
<dbReference type="RefSeq" id="XP_019193281.1">
    <molecule id="P93194-1"/>
    <property type="nucleotide sequence ID" value="XM_019337736.1"/>
</dbReference>
<dbReference type="SMR" id="P93194"/>
<dbReference type="GlyCosmos" id="P93194">
    <property type="glycosylation" value="19 sites, No reported glycans"/>
</dbReference>
<dbReference type="GeneID" id="109187519"/>
<dbReference type="KEGG" id="ini:109187519"/>
<dbReference type="OrthoDB" id="676979at2759"/>
<dbReference type="GO" id="GO:0005576">
    <property type="term" value="C:extracellular region"/>
    <property type="evidence" value="ECO:0000303"/>
    <property type="project" value="UniProtKB"/>
</dbReference>
<dbReference type="GO" id="GO:0005886">
    <property type="term" value="C:plasma membrane"/>
    <property type="evidence" value="ECO:0000303"/>
    <property type="project" value="UniProtKB"/>
</dbReference>
<dbReference type="GO" id="GO:0005524">
    <property type="term" value="F:ATP binding"/>
    <property type="evidence" value="ECO:0007669"/>
    <property type="project" value="UniProtKB-KW"/>
</dbReference>
<dbReference type="GO" id="GO:0106310">
    <property type="term" value="F:protein serine kinase activity"/>
    <property type="evidence" value="ECO:0007669"/>
    <property type="project" value="RHEA"/>
</dbReference>
<dbReference type="GO" id="GO:0004674">
    <property type="term" value="F:protein serine/threonine kinase activity"/>
    <property type="evidence" value="ECO:0007669"/>
    <property type="project" value="UniProtKB-KW"/>
</dbReference>
<dbReference type="GO" id="GO:0019199">
    <property type="term" value="F:transmembrane receptor protein kinase activity"/>
    <property type="evidence" value="ECO:0000303"/>
    <property type="project" value="UniProtKB"/>
</dbReference>
<dbReference type="GO" id="GO:0006952">
    <property type="term" value="P:defense response"/>
    <property type="evidence" value="ECO:0007669"/>
    <property type="project" value="UniProtKB-ARBA"/>
</dbReference>
<dbReference type="GO" id="GO:0006468">
    <property type="term" value="P:protein phosphorylation"/>
    <property type="evidence" value="ECO:0000303"/>
    <property type="project" value="UniProtKB"/>
</dbReference>
<dbReference type="GO" id="GO:0051707">
    <property type="term" value="P:response to other organism"/>
    <property type="evidence" value="ECO:0007669"/>
    <property type="project" value="UniProtKB-ARBA"/>
</dbReference>
<dbReference type="FunFam" id="3.80.10.10:FF:000275">
    <property type="entry name" value="Leucine-rich repeat receptor-like protein kinase"/>
    <property type="match status" value="1"/>
</dbReference>
<dbReference type="FunFam" id="3.80.10.10:FF:000233">
    <property type="entry name" value="Leucine-rich repeat receptor-like protein kinase TDR"/>
    <property type="match status" value="1"/>
</dbReference>
<dbReference type="FunFam" id="3.80.10.10:FF:000041">
    <property type="entry name" value="LRR receptor-like serine/threonine-protein kinase ERECTA"/>
    <property type="match status" value="1"/>
</dbReference>
<dbReference type="FunFam" id="3.80.10.10:FF:000111">
    <property type="entry name" value="LRR receptor-like serine/threonine-protein kinase ERECTA"/>
    <property type="match status" value="1"/>
</dbReference>
<dbReference type="FunFam" id="3.30.200.20:FF:000260">
    <property type="entry name" value="LRR receptor-like serine/threonine-protein kinase RPK2"/>
    <property type="match status" value="1"/>
</dbReference>
<dbReference type="FunFam" id="1.10.510.10:FF:000569">
    <property type="entry name" value="Serine/threonine-protein kinase-like protein CCR4"/>
    <property type="match status" value="1"/>
</dbReference>
<dbReference type="Gene3D" id="3.30.200.20">
    <property type="entry name" value="Phosphorylase Kinase, domain 1"/>
    <property type="match status" value="1"/>
</dbReference>
<dbReference type="Gene3D" id="3.80.10.10">
    <property type="entry name" value="Ribonuclease Inhibitor"/>
    <property type="match status" value="3"/>
</dbReference>
<dbReference type="Gene3D" id="1.10.510.10">
    <property type="entry name" value="Transferase(Phosphotransferase) domain 1"/>
    <property type="match status" value="1"/>
</dbReference>
<dbReference type="InterPro" id="IPR011009">
    <property type="entry name" value="Kinase-like_dom_sf"/>
</dbReference>
<dbReference type="InterPro" id="IPR001611">
    <property type="entry name" value="Leu-rich_rpt"/>
</dbReference>
<dbReference type="InterPro" id="IPR003591">
    <property type="entry name" value="Leu-rich_rpt_typical-subtyp"/>
</dbReference>
<dbReference type="InterPro" id="IPR032675">
    <property type="entry name" value="LRR_dom_sf"/>
</dbReference>
<dbReference type="InterPro" id="IPR013210">
    <property type="entry name" value="LRR_N_plant-typ"/>
</dbReference>
<dbReference type="InterPro" id="IPR055414">
    <property type="entry name" value="LRR_R13L4/SHOC2-like"/>
</dbReference>
<dbReference type="InterPro" id="IPR000719">
    <property type="entry name" value="Prot_kinase_dom"/>
</dbReference>
<dbReference type="InterPro" id="IPR017441">
    <property type="entry name" value="Protein_kinase_ATP_BS"/>
</dbReference>
<dbReference type="InterPro" id="IPR008271">
    <property type="entry name" value="Ser/Thr_kinase_AS"/>
</dbReference>
<dbReference type="InterPro" id="IPR051420">
    <property type="entry name" value="Ser_Thr_Kinases_DiverseReg"/>
</dbReference>
<dbReference type="PANTHER" id="PTHR48005">
    <property type="entry name" value="LEUCINE RICH REPEAT KINASE 2"/>
    <property type="match status" value="1"/>
</dbReference>
<dbReference type="PANTHER" id="PTHR48005:SF65">
    <property type="entry name" value="LEUCINE-RICH REPEAT RECEPTOR-LIKE SERINE_THREONINE_TYROSINE-PROTEIN KINASE SOBIR1"/>
    <property type="match status" value="1"/>
</dbReference>
<dbReference type="Pfam" id="PF00560">
    <property type="entry name" value="LRR_1"/>
    <property type="match status" value="11"/>
</dbReference>
<dbReference type="Pfam" id="PF23598">
    <property type="entry name" value="LRR_14"/>
    <property type="match status" value="1"/>
</dbReference>
<dbReference type="Pfam" id="PF13855">
    <property type="entry name" value="LRR_8"/>
    <property type="match status" value="1"/>
</dbReference>
<dbReference type="Pfam" id="PF08263">
    <property type="entry name" value="LRRNT_2"/>
    <property type="match status" value="1"/>
</dbReference>
<dbReference type="Pfam" id="PF00069">
    <property type="entry name" value="Pkinase"/>
    <property type="match status" value="1"/>
</dbReference>
<dbReference type="SMART" id="SM00369">
    <property type="entry name" value="LRR_TYP"/>
    <property type="match status" value="12"/>
</dbReference>
<dbReference type="SMART" id="SM00220">
    <property type="entry name" value="S_TKc"/>
    <property type="match status" value="1"/>
</dbReference>
<dbReference type="SUPFAM" id="SSF56112">
    <property type="entry name" value="Protein kinase-like (PK-like)"/>
    <property type="match status" value="1"/>
</dbReference>
<dbReference type="SUPFAM" id="SSF52047">
    <property type="entry name" value="RNI-like"/>
    <property type="match status" value="2"/>
</dbReference>
<dbReference type="PROSITE" id="PS51450">
    <property type="entry name" value="LRR"/>
    <property type="match status" value="18"/>
</dbReference>
<dbReference type="PROSITE" id="PS00107">
    <property type="entry name" value="PROTEIN_KINASE_ATP"/>
    <property type="match status" value="1"/>
</dbReference>
<dbReference type="PROSITE" id="PS50011">
    <property type="entry name" value="PROTEIN_KINASE_DOM"/>
    <property type="match status" value="1"/>
</dbReference>
<dbReference type="PROSITE" id="PS00108">
    <property type="entry name" value="PROTEIN_KINASE_ST"/>
    <property type="match status" value="1"/>
</dbReference>
<proteinExistence type="evidence at transcript level"/>
<protein>
    <recommendedName>
        <fullName>Receptor-like protein kinase</fullName>
        <ecNumber>2.7.11.1</ecNumber>
    </recommendedName>
</protein>
<keyword id="KW-0024">Alternative initiation</keyword>
<keyword id="KW-0025">Alternative splicing</keyword>
<keyword id="KW-0067">ATP-binding</keyword>
<keyword id="KW-1003">Cell membrane</keyword>
<keyword id="KW-0325">Glycoprotein</keyword>
<keyword id="KW-0418">Kinase</keyword>
<keyword id="KW-0433">Leucine-rich repeat</keyword>
<keyword id="KW-0472">Membrane</keyword>
<keyword id="KW-0547">Nucleotide-binding</keyword>
<keyword id="KW-0677">Repeat</keyword>
<keyword id="KW-0964">Secreted</keyword>
<keyword id="KW-0723">Serine/threonine-protein kinase</keyword>
<keyword id="KW-0732">Signal</keyword>
<keyword id="KW-0808">Transferase</keyword>
<keyword id="KW-0812">Transmembrane</keyword>
<keyword id="KW-1133">Transmembrane helix</keyword>
<name>RPK1_IPONI</name>
<reference evidence="6" key="1">
    <citation type="journal article" date="2000" name="Plant Mol. Biol.">
        <title>Alternative transcript initiation and novel post-transcriptional processing of a leucine-rich repeat receptor-like protein kinase gene that responds to short-day photoperiodic floral induction in morning glory (Ipomoea nil).</title>
        <authorList>
            <person name="Bassett C.L."/>
            <person name="Nickerson M.L."/>
            <person name="Cohen R.A."/>
            <person name="Rajeevan M.S."/>
        </authorList>
    </citation>
    <scope>NUCLEOTIDE SEQUENCE [GENOMIC DNA] (ISOFORMS INRPK1; INRPK1A; INRPK1B AND INRPK1C)</scope>
    <scope>TISSUE SPECIFICITY</scope>
    <source>
        <strain evidence="7">cv. Violet</strain>
        <tissue evidence="7">Leaf</tissue>
    </source>
</reference>
<gene>
    <name type="primary">INRPK1</name>
</gene>
<accession>P93194</accession>
<accession>Q9AVV0</accession>
<accession>Q9AVV1</accession>
<accession>Q9AVV2</accession>
<sequence>MKVAVNTFLLFLCSTSSIYAAFALNSDGAALLSLTRHWTSIPSDITQSWNASDSTPCSWLGVECDRRQFVDTLNLSSYGISGEFGPEISHLKHLKKVVLSGNGFFGSIPSQLGNCSLLEHIDLSSNSFTGNIPDTLGALQNLRNLSLFFNSLIGPFPESLLSIPHLETVYFTGNGLNGSIPSNIGNMSELTTLWLDDNQFSGPVPSSLGNITTLQELYLNDNNLVGTLPVTLNNLENLVYLDVRNNSLVGAIPLDFVSCKQIDTISLSNNQFTGGLPPGLGNCTSLREFGAFSCALSGPIPSCFGQLTKLDTLYLAGNHFSGRIPPELGKCKSMIDLQLQQNQLEGEIPGELGMLSQLQYLHLYTNNLSGEVPLSIWKIQSLQSLQLYQNNLSGELPVDMTELKQLVSLALYENHFTGVIPQDLGANSSLEVLDLTRNMFTGHIPPNLCSQKKLKRLLLGYNYLEGSVPSDLGGCSTLERLILEENNLRGGLPDFVEKQNLLFFDLSGNNFTGPIPPSLGNLKNVTAIYLSSNQLSGSIPPELGSLVKLEHLNLSHNILKGILPSELSNCHKLSELDASHNLLNGSIPSTLGSLTELTKLSLGENSFSGGIPTSLFQSNKLLNLQLGGNLLAGDIPPVGALQALRSLNLSSNKLNGQLPIDLGKLKMLEELDVSHNNLSGTLRVLSTIQSLTFINISHNLFSGPVPPSLTKFLNSSPTSFSGNSDLCINCPADGLACPESSILRPCNMQSNTGKGGLSTLGIAMIVLGALLFIICLFLFSAFLFLHCKKSVQEIAISAQEGDGSLLNKVLEATENLNDKYVIGKGAHGTIYKATLSPDKVYAVKKLVFTGIKNGSVSMVREIETIGKVRHRNLIKLEEFWLRKEYGLILYTYMENGSLHDILHETNPPKPLDWSTRHNIAVGTAHGLAYLHFDCDPAIVHRDIKPMNILLDSDLEPHISDFGIAKLLDQSATSIPSNTVQGTIGYMAPENAFTTVKSRESDVYSYGVVLLELITRKKALDPSFNGETDIVGWVRSVWTQTGEIQKIVDPSLLDELIDSSVMEQVTEALSLALRCAEKEVDKRPTMRDVVKQLTRWSIRSYSSSVRNKSK</sequence>
<evidence type="ECO:0000255" key="1"/>
<evidence type="ECO:0000255" key="2">
    <source>
        <dbReference type="PROSITE-ProRule" id="PRU00159"/>
    </source>
</evidence>
<evidence type="ECO:0000255" key="3">
    <source>
        <dbReference type="PROSITE-ProRule" id="PRU10027"/>
    </source>
</evidence>
<evidence type="ECO:0000269" key="4">
    <source>
    </source>
</evidence>
<evidence type="ECO:0000303" key="5">
    <source>
    </source>
</evidence>
<evidence type="ECO:0000305" key="6"/>
<evidence type="ECO:0000312" key="7">
    <source>
        <dbReference type="EMBL" id="AAB36558.2"/>
    </source>
</evidence>